<sequence length="2104" mass="236602">MESQEFIVLYTHQKMKKSKVWQDGILKITHLGNKAILYDDKGACLESLFLKCLEVKPGDDLESDRYLITVEEVKVAGAIGIVKQNVNKEAPELNSRTFISSGRSLGCQPSGLKRKFTGFQGPRQVPKKMVIMESGESAASHEAKKTGPTIFSPFCSMPPLFPTVGKKDVNNILADPENIVTYKNRERNAMDFSSVFSPSFQINPEVLCEENYFCSPVNSGNKLSDSLLTNEPVKRDSLASHYSGVSQNIRSKAQILALLKSESSSSCEELNSEMTEHFPQKQPQGSLKIATKPKYLIQQEECAEMKSTENLYYQHQSENTMRNKSRWAMYLSSQSSPIHSSTVDGNDTERKPKAQEDDVNSNLKDLSLQKIIQFVETYAEERKKYNVDQSVGNNDPSWNQEVKLEIPSFNESSSLQVTCSSAENDGILSESDIQEDNKIPFNQNDKGCIKGSVLIKENAQEVNTCGTLEKEYEQSESSLPELKHLQIESSNNSRISDDITDMISESKMDNESLNSIHESLSNVTQPFLEVTFNLNNFETSDTEEESQESNKISQDSESWVKDILVNDGNSCFQKRSENTNCEEIEGEHLPFLTSVSDKPTVTFPVKETLPSQFCDKTYVGFDMGICKTENTGKEIEEYSDTLSNFESFKWTDAVYGDNKEDANKPIQEVRINYDFALPPNKSKGINMNLHIPHIQNQIAENSNLFSEDAQPQPFILGSDLDKNDEHVLPSTSSSDNSVQLLNTNQNHYECIALDKSNTHISNSLFYPLGKKHLISKDTEAHISEPEDLGKIRSPPPDHVEVETAREGKQYWNPRNSSELSGLVNTISILKSLCEHSTALDSLEILKKKNTVFQQGTQQTYEPDSPPEVRKPFITVVSPKSPHLHKDSQQILKEDEVELSEPLQSVQFSSSGSKEETAFQAVIPKQIERKTCDPKPVEFQGHQVKGSATSGVMVRGHSSQLGCSQFPDSTEYENFMTETPELPSTCMQIDFLQVTSPEENISTLSPVSTFSLNSRDEDFMVEFSETSLKARTLPDDLHFLNLEGMKKSRSLENENLQRLSLLSRTQVPLITLPRTDGPPDLDSHSYMINSNTYESSGSPMLNLCEKSAVLSFSIEPEDQNETFFSEESREVNPGDVSLNNISTQSKWLKYQNTSQCNVATPNRVDKRITDGFFAEAVSGMHFRDTSERQSDAVNESSLDSVHLQMIKGMLYQQRQDFSSQDSVSRKKVLSLNLKQTSKTEEIKNVLGGSTCYNYSVKDLQEISGSELCFPSGQKIKSAYLPQRQIHIPAVFQSPAHYKQTFTSCLIEHLNILLFGLAQNLQKALSKVDISFYTSLKGEKLKNAENNVPSCHHSQPAKLVMVKKEGPNKGRLFYTCDGPKADRCKFFKWLEDVTPGYSTQEGARPGMVLSDIKSIGLYLRSQKIPLYEECQLLVRKGFDFQRKQYGKLKKFTTVNPEFYNEPKTKLYLKLSRKERSSAYSKNDLWVVSKTLDFELDTFIACSAFFGPSSINEIEILPLKGYFPSNWPTNMVVHALLVCNASTELTTLKNIQDYFNPATLPLTQYLLTTSSPTIVSNKRVSKRKFIPPAFTNVSTKFELLSLGATLKLASELIQVHKLNKDQATALIQIAQMMASHESIEEVKELQTHTFPITIIHGVFGAGKSYLLAVVILFFVQLFEKSEAPTIGNARPWKLLISSSTNVAVDRVLLGLLSLGFENFIRVGSVRKIAKPILPYSLHAGSENESEQLKELHALMKEDLTPTERVYVRKSIEQHKLGTNRTLLKQVRVVGVTCAACPFPCMNDLKFPVVVLDECSQITEPASLLPIARFECEKLILVGDPKQLPPTIQGSDAAHENGLEQTLFDRLCLMGHKPILLRTQYRCHPAISAIANDLFYKGALMNGVTEIERSPLLEWLPTLCFYNVKGLEQIERDNSFHNVAEATFTLKLIQSLIASGIAGSMIGVITLYKSQMYKLCHLLSAVDFHHPDIKTVQVSTVDAFQGAEKEIIILSCVRTRQVGFIDSEKRMNVALTRGKRHLLIVGNLACLRKNQLWGRVIQHCEGREDGLQHANQYEPQLNHLLKDYFEKQVEEKQKKKSEKEKSKDKSHS</sequence>
<organism>
    <name type="scientific">Homo sapiens</name>
    <name type="common">Human</name>
    <dbReference type="NCBI Taxonomy" id="9606"/>
    <lineage>
        <taxon>Eukaryota</taxon>
        <taxon>Metazoa</taxon>
        <taxon>Chordata</taxon>
        <taxon>Craniata</taxon>
        <taxon>Vertebrata</taxon>
        <taxon>Euteleostomi</taxon>
        <taxon>Mammalia</taxon>
        <taxon>Eutheria</taxon>
        <taxon>Euarchontoglires</taxon>
        <taxon>Primates</taxon>
        <taxon>Haplorrhini</taxon>
        <taxon>Catarrhini</taxon>
        <taxon>Hominidae</taxon>
        <taxon>Homo</taxon>
    </lineage>
</organism>
<name>ZGRF1_HUMAN</name>
<dbReference type="EC" id="5.6.2.3" evidence="5"/>
<dbReference type="EMBL" id="AK002193">
    <property type="protein sequence ID" value="BAA92130.1"/>
    <property type="molecule type" value="mRNA"/>
</dbReference>
<dbReference type="EMBL" id="AK090556">
    <property type="protein sequence ID" value="BAG52184.1"/>
    <property type="molecule type" value="mRNA"/>
</dbReference>
<dbReference type="EMBL" id="AK126054">
    <property type="protein sequence ID" value="BAC86416.1"/>
    <property type="status" value="ALT_INIT"/>
    <property type="molecule type" value="mRNA"/>
</dbReference>
<dbReference type="EMBL" id="AK299831">
    <property type="protein sequence ID" value="BAG61698.1"/>
    <property type="molecule type" value="mRNA"/>
</dbReference>
<dbReference type="EMBL" id="AK302613">
    <property type="protein sequence ID" value="BAG63860.1"/>
    <property type="molecule type" value="mRNA"/>
</dbReference>
<dbReference type="EMBL" id="AC023886">
    <property type="status" value="NOT_ANNOTATED_CDS"/>
    <property type="molecule type" value="Genomic_DNA"/>
</dbReference>
<dbReference type="EMBL" id="CH471057">
    <property type="protein sequence ID" value="EAX06281.1"/>
    <property type="molecule type" value="Genomic_DNA"/>
</dbReference>
<dbReference type="EMBL" id="AL137700">
    <property type="protein sequence ID" value="CAB70881.1"/>
    <property type="molecule type" value="mRNA"/>
</dbReference>
<dbReference type="EMBL" id="BC044799">
    <property type="protein sequence ID" value="AAH44799.1"/>
    <property type="molecule type" value="mRNA"/>
</dbReference>
<dbReference type="CCDS" id="CCDS3700.2">
    <molecule id="Q86YA3-1"/>
</dbReference>
<dbReference type="PIR" id="T46441">
    <property type="entry name" value="T46441"/>
</dbReference>
<dbReference type="RefSeq" id="NP_060862.3">
    <molecule id="Q86YA3-1"/>
    <property type="nucleotide sequence ID" value="NM_018392.4"/>
</dbReference>
<dbReference type="RefSeq" id="XP_005263172.1">
    <molecule id="Q86YA3-1"/>
    <property type="nucleotide sequence ID" value="XM_005263115.5"/>
</dbReference>
<dbReference type="RefSeq" id="XP_047271879.1">
    <molecule id="Q86YA3-4"/>
    <property type="nucleotide sequence ID" value="XM_047415923.1"/>
</dbReference>
<dbReference type="RefSeq" id="XP_054206389.1">
    <molecule id="Q86YA3-1"/>
    <property type="nucleotide sequence ID" value="XM_054350414.1"/>
</dbReference>
<dbReference type="RefSeq" id="XP_054206411.1">
    <molecule id="Q86YA3-4"/>
    <property type="nucleotide sequence ID" value="XM_054350436.1"/>
</dbReference>
<dbReference type="SMR" id="Q86YA3"/>
<dbReference type="BioGRID" id="120626">
    <property type="interactions" value="28"/>
</dbReference>
<dbReference type="FunCoup" id="Q86YA3">
    <property type="interactions" value="370"/>
</dbReference>
<dbReference type="IntAct" id="Q86YA3">
    <property type="interactions" value="22"/>
</dbReference>
<dbReference type="MINT" id="Q86YA3"/>
<dbReference type="STRING" id="9606.ENSP00000424737"/>
<dbReference type="GlyGen" id="Q86YA3">
    <property type="glycosylation" value="2 sites, 1 O-linked glycan (1 site)"/>
</dbReference>
<dbReference type="iPTMnet" id="Q86YA3"/>
<dbReference type="PhosphoSitePlus" id="Q86YA3"/>
<dbReference type="BioMuta" id="ZGRF1"/>
<dbReference type="DMDM" id="550544257"/>
<dbReference type="jPOST" id="Q86YA3"/>
<dbReference type="MassIVE" id="Q86YA3"/>
<dbReference type="PaxDb" id="9606-ENSP00000424737"/>
<dbReference type="PeptideAtlas" id="Q86YA3"/>
<dbReference type="ProteomicsDB" id="19644"/>
<dbReference type="ProteomicsDB" id="34100"/>
<dbReference type="ProteomicsDB" id="70390">
    <molecule id="Q86YA3-1"/>
</dbReference>
<dbReference type="ProteomicsDB" id="70391">
    <molecule id="Q86YA3-2"/>
</dbReference>
<dbReference type="Antibodypedia" id="48768">
    <property type="antibodies" value="122 antibodies from 19 providers"/>
</dbReference>
<dbReference type="DNASU" id="55345"/>
<dbReference type="Ensembl" id="ENST00000309071.9">
    <molecule id="Q86YA3-4"/>
    <property type="protein sequence ID" value="ENSP00000309095.5"/>
    <property type="gene ID" value="ENSG00000138658.16"/>
</dbReference>
<dbReference type="Ensembl" id="ENST00000445203.6">
    <molecule id="Q86YA3-1"/>
    <property type="protein sequence ID" value="ENSP00000390505.3"/>
    <property type="gene ID" value="ENSG00000138658.16"/>
</dbReference>
<dbReference type="Ensembl" id="ENST00000505019.6">
    <molecule id="Q86YA3-1"/>
    <property type="protein sequence ID" value="ENSP00000424737.1"/>
    <property type="gene ID" value="ENSG00000138658.16"/>
</dbReference>
<dbReference type="Ensembl" id="ENST00000612287.4">
    <molecule id="Q86YA3-2"/>
    <property type="protein sequence ID" value="ENSP00000482897.1"/>
    <property type="gene ID" value="ENSG00000138658.16"/>
</dbReference>
<dbReference type="GeneID" id="55345"/>
<dbReference type="KEGG" id="hsa:55345"/>
<dbReference type="MANE-Select" id="ENST00000505019.6">
    <property type="protein sequence ID" value="ENSP00000424737.1"/>
    <property type="RefSeq nucleotide sequence ID" value="NM_018392.5"/>
    <property type="RefSeq protein sequence ID" value="NP_060862.3"/>
</dbReference>
<dbReference type="UCSC" id="uc003iau.4">
    <molecule id="Q86YA3-1"/>
    <property type="organism name" value="human"/>
</dbReference>
<dbReference type="AGR" id="HGNC:25654"/>
<dbReference type="CTD" id="55345"/>
<dbReference type="DisGeNET" id="55345"/>
<dbReference type="GeneCards" id="ZGRF1"/>
<dbReference type="HGNC" id="HGNC:25654">
    <property type="gene designation" value="ZGRF1"/>
</dbReference>
<dbReference type="HPA" id="ENSG00000138658">
    <property type="expression patterns" value="Tissue enhanced (bone)"/>
</dbReference>
<dbReference type="neXtProt" id="NX_Q86YA3"/>
<dbReference type="OpenTargets" id="ENSG00000138658"/>
<dbReference type="PharmGKB" id="PA144596502"/>
<dbReference type="VEuPathDB" id="HostDB:ENSG00000138658"/>
<dbReference type="eggNOG" id="KOG1802">
    <property type="taxonomic scope" value="Eukaryota"/>
</dbReference>
<dbReference type="GeneTree" id="ENSGT00940000162642"/>
<dbReference type="HOGENOM" id="CLU_236590_0_0_1"/>
<dbReference type="InParanoid" id="Q86YA3"/>
<dbReference type="OrthoDB" id="6513042at2759"/>
<dbReference type="PAN-GO" id="Q86YA3">
    <property type="GO annotations" value="4 GO annotations based on evolutionary models"/>
</dbReference>
<dbReference type="PhylomeDB" id="Q86YA3"/>
<dbReference type="TreeFam" id="TF335661"/>
<dbReference type="PathwayCommons" id="Q86YA3"/>
<dbReference type="SignaLink" id="Q86YA3"/>
<dbReference type="BioGRID-ORCS" id="55345">
    <property type="hits" value="33 hits in 1138 CRISPR screens"/>
</dbReference>
<dbReference type="ChiTaRS" id="ZGRF1">
    <property type="organism name" value="human"/>
</dbReference>
<dbReference type="GenomeRNAi" id="55345"/>
<dbReference type="Pharos" id="Q86YA3">
    <property type="development level" value="Tdark"/>
</dbReference>
<dbReference type="PRO" id="PR:Q86YA3"/>
<dbReference type="Proteomes" id="UP000005640">
    <property type="component" value="Chromosome 4"/>
</dbReference>
<dbReference type="RNAct" id="Q86YA3">
    <property type="molecule type" value="protein"/>
</dbReference>
<dbReference type="Bgee" id="ENSG00000138658">
    <property type="expression patterns" value="Expressed in male germ line stem cell (sensu Vertebrata) in testis and 158 other cell types or tissues"/>
</dbReference>
<dbReference type="ExpressionAtlas" id="Q86YA3">
    <property type="expression patterns" value="baseline and differential"/>
</dbReference>
<dbReference type="GO" id="GO:0005634">
    <property type="term" value="C:nucleus"/>
    <property type="evidence" value="ECO:0000314"/>
    <property type="project" value="UniProtKB"/>
</dbReference>
<dbReference type="GO" id="GO:0035861">
    <property type="term" value="C:site of double-strand break"/>
    <property type="evidence" value="ECO:0000318"/>
    <property type="project" value="GO_Central"/>
</dbReference>
<dbReference type="GO" id="GO:0043139">
    <property type="term" value="F:5'-3' DNA helicase activity"/>
    <property type="evidence" value="ECO:0000314"/>
    <property type="project" value="UniProtKB"/>
</dbReference>
<dbReference type="GO" id="GO:0005524">
    <property type="term" value="F:ATP binding"/>
    <property type="evidence" value="ECO:0007669"/>
    <property type="project" value="UniProtKB-KW"/>
</dbReference>
<dbReference type="GO" id="GO:0016787">
    <property type="term" value="F:hydrolase activity"/>
    <property type="evidence" value="ECO:0007669"/>
    <property type="project" value="UniProtKB-KW"/>
</dbReference>
<dbReference type="GO" id="GO:0008270">
    <property type="term" value="F:zinc ion binding"/>
    <property type="evidence" value="ECO:0007669"/>
    <property type="project" value="UniProtKB-KW"/>
</dbReference>
<dbReference type="GO" id="GO:0006302">
    <property type="term" value="P:double-strand break repair"/>
    <property type="evidence" value="ECO:0000318"/>
    <property type="project" value="GO_Central"/>
</dbReference>
<dbReference type="GO" id="GO:0000725">
    <property type="term" value="P:recombinational repair"/>
    <property type="evidence" value="ECO:0000314"/>
    <property type="project" value="UniProtKB"/>
</dbReference>
<dbReference type="CDD" id="cd18808">
    <property type="entry name" value="SF1_C_Upf1"/>
    <property type="match status" value="1"/>
</dbReference>
<dbReference type="FunFam" id="3.40.50.300:FF:001087">
    <property type="entry name" value="ZGRF1 isoform 9"/>
    <property type="match status" value="1"/>
</dbReference>
<dbReference type="Gene3D" id="3.40.50.300">
    <property type="entry name" value="P-loop containing nucleotide triphosphate hydrolases"/>
    <property type="match status" value="2"/>
</dbReference>
<dbReference type="InterPro" id="IPR041679">
    <property type="entry name" value="DNA2/NAM7-like_C"/>
</dbReference>
<dbReference type="InterPro" id="IPR041677">
    <property type="entry name" value="DNA2/NAM7_AAA_11"/>
</dbReference>
<dbReference type="InterPro" id="IPR052800">
    <property type="entry name" value="DNA_Repair_Helicase_ZGRF1"/>
</dbReference>
<dbReference type="InterPro" id="IPR027417">
    <property type="entry name" value="P-loop_NTPase"/>
</dbReference>
<dbReference type="InterPro" id="IPR047187">
    <property type="entry name" value="SF1_C_Upf1"/>
</dbReference>
<dbReference type="InterPro" id="IPR018838">
    <property type="entry name" value="ZGRF1-like_N"/>
</dbReference>
<dbReference type="InterPro" id="IPR010666">
    <property type="entry name" value="Znf_GRF"/>
</dbReference>
<dbReference type="PANTHER" id="PTHR28535:SF1">
    <property type="entry name" value="PROTEIN ZGRF1"/>
    <property type="match status" value="1"/>
</dbReference>
<dbReference type="PANTHER" id="PTHR28535">
    <property type="entry name" value="ZINC FINGER GRF-TYPE CONTAINING 1"/>
    <property type="match status" value="1"/>
</dbReference>
<dbReference type="Pfam" id="PF13086">
    <property type="entry name" value="AAA_11"/>
    <property type="match status" value="1"/>
</dbReference>
<dbReference type="Pfam" id="PF13087">
    <property type="entry name" value="AAA_12"/>
    <property type="match status" value="1"/>
</dbReference>
<dbReference type="Pfam" id="PF10382">
    <property type="entry name" value="ZGRF1-like_N"/>
    <property type="match status" value="1"/>
</dbReference>
<dbReference type="Pfam" id="PF06839">
    <property type="entry name" value="Zn_ribbon_GRF"/>
    <property type="match status" value="1"/>
</dbReference>
<dbReference type="SUPFAM" id="SSF52540">
    <property type="entry name" value="P-loop containing nucleoside triphosphate hydrolases"/>
    <property type="match status" value="1"/>
</dbReference>
<dbReference type="PROSITE" id="PS51999">
    <property type="entry name" value="ZF_GRF"/>
    <property type="match status" value="1"/>
</dbReference>
<accession>Q86YA3</accession>
<accession>B3KQX2</accession>
<accession>B4DSN6</accession>
<accession>B4DYU8</accession>
<accession>E9PDE1</accession>
<accession>G5EA02</accession>
<accession>Q6ZU11</accession>
<accession>Q9NSW3</accession>
<accession>Q9NUJ4</accession>
<proteinExistence type="evidence at protein level"/>
<keyword id="KW-0025">Alternative splicing</keyword>
<keyword id="KW-0067">ATP-binding</keyword>
<keyword id="KW-0227">DNA damage</keyword>
<keyword id="KW-0234">DNA repair</keyword>
<keyword id="KW-0347">Helicase</keyword>
<keyword id="KW-0378">Hydrolase</keyword>
<keyword id="KW-0413">Isomerase</keyword>
<keyword id="KW-0479">Metal-binding</keyword>
<keyword id="KW-0547">Nucleotide-binding</keyword>
<keyword id="KW-0539">Nucleus</keyword>
<keyword id="KW-0597">Phosphoprotein</keyword>
<keyword id="KW-1267">Proteomics identification</keyword>
<keyword id="KW-1185">Reference proteome</keyword>
<keyword id="KW-0862">Zinc</keyword>
<keyword id="KW-0863">Zinc-finger</keyword>
<reference key="1">
    <citation type="journal article" date="2004" name="Nat. Genet.">
        <title>Complete sequencing and characterization of 21,243 full-length human cDNAs.</title>
        <authorList>
            <person name="Ota T."/>
            <person name="Suzuki Y."/>
            <person name="Nishikawa T."/>
            <person name="Otsuki T."/>
            <person name="Sugiyama T."/>
            <person name="Irie R."/>
            <person name="Wakamatsu A."/>
            <person name="Hayashi K."/>
            <person name="Sato H."/>
            <person name="Nagai K."/>
            <person name="Kimura K."/>
            <person name="Makita H."/>
            <person name="Sekine M."/>
            <person name="Obayashi M."/>
            <person name="Nishi T."/>
            <person name="Shibahara T."/>
            <person name="Tanaka T."/>
            <person name="Ishii S."/>
            <person name="Yamamoto J."/>
            <person name="Saito K."/>
            <person name="Kawai Y."/>
            <person name="Isono Y."/>
            <person name="Nakamura Y."/>
            <person name="Nagahari K."/>
            <person name="Murakami K."/>
            <person name="Yasuda T."/>
            <person name="Iwayanagi T."/>
            <person name="Wagatsuma M."/>
            <person name="Shiratori A."/>
            <person name="Sudo H."/>
            <person name="Hosoiri T."/>
            <person name="Kaku Y."/>
            <person name="Kodaira H."/>
            <person name="Kondo H."/>
            <person name="Sugawara M."/>
            <person name="Takahashi M."/>
            <person name="Kanda K."/>
            <person name="Yokoi T."/>
            <person name="Furuya T."/>
            <person name="Kikkawa E."/>
            <person name="Omura Y."/>
            <person name="Abe K."/>
            <person name="Kamihara K."/>
            <person name="Katsuta N."/>
            <person name="Sato K."/>
            <person name="Tanikawa M."/>
            <person name="Yamazaki M."/>
            <person name="Ninomiya K."/>
            <person name="Ishibashi T."/>
            <person name="Yamashita H."/>
            <person name="Murakawa K."/>
            <person name="Fujimori K."/>
            <person name="Tanai H."/>
            <person name="Kimata M."/>
            <person name="Watanabe M."/>
            <person name="Hiraoka S."/>
            <person name="Chiba Y."/>
            <person name="Ishida S."/>
            <person name="Ono Y."/>
            <person name="Takiguchi S."/>
            <person name="Watanabe S."/>
            <person name="Yosida M."/>
            <person name="Hotuta T."/>
            <person name="Kusano J."/>
            <person name="Kanehori K."/>
            <person name="Takahashi-Fujii A."/>
            <person name="Hara H."/>
            <person name="Tanase T.-O."/>
            <person name="Nomura Y."/>
            <person name="Togiya S."/>
            <person name="Komai F."/>
            <person name="Hara R."/>
            <person name="Takeuchi K."/>
            <person name="Arita M."/>
            <person name="Imose N."/>
            <person name="Musashino K."/>
            <person name="Yuuki H."/>
            <person name="Oshima A."/>
            <person name="Sasaki N."/>
            <person name="Aotsuka S."/>
            <person name="Yoshikawa Y."/>
            <person name="Matsunawa H."/>
            <person name="Ichihara T."/>
            <person name="Shiohata N."/>
            <person name="Sano S."/>
            <person name="Moriya S."/>
            <person name="Momiyama H."/>
            <person name="Satoh N."/>
            <person name="Takami S."/>
            <person name="Terashima Y."/>
            <person name="Suzuki O."/>
            <person name="Nakagawa S."/>
            <person name="Senoh A."/>
            <person name="Mizoguchi H."/>
            <person name="Goto Y."/>
            <person name="Shimizu F."/>
            <person name="Wakebe H."/>
            <person name="Hishigaki H."/>
            <person name="Watanabe T."/>
            <person name="Sugiyama A."/>
            <person name="Takemoto M."/>
            <person name="Kawakami B."/>
            <person name="Yamazaki M."/>
            <person name="Watanabe K."/>
            <person name="Kumagai A."/>
            <person name="Itakura S."/>
            <person name="Fukuzumi Y."/>
            <person name="Fujimori Y."/>
            <person name="Komiyama M."/>
            <person name="Tashiro H."/>
            <person name="Tanigami A."/>
            <person name="Fujiwara T."/>
            <person name="Ono T."/>
            <person name="Yamada K."/>
            <person name="Fujii Y."/>
            <person name="Ozaki K."/>
            <person name="Hirao M."/>
            <person name="Ohmori Y."/>
            <person name="Kawabata A."/>
            <person name="Hikiji T."/>
            <person name="Kobatake N."/>
            <person name="Inagaki H."/>
            <person name="Ikema Y."/>
            <person name="Okamoto S."/>
            <person name="Okitani R."/>
            <person name="Kawakami T."/>
            <person name="Noguchi S."/>
            <person name="Itoh T."/>
            <person name="Shigeta K."/>
            <person name="Senba T."/>
            <person name="Matsumura K."/>
            <person name="Nakajima Y."/>
            <person name="Mizuno T."/>
            <person name="Morinaga M."/>
            <person name="Sasaki M."/>
            <person name="Togashi T."/>
            <person name="Oyama M."/>
            <person name="Hata H."/>
            <person name="Watanabe M."/>
            <person name="Komatsu T."/>
            <person name="Mizushima-Sugano J."/>
            <person name="Satoh T."/>
            <person name="Shirai Y."/>
            <person name="Takahashi Y."/>
            <person name="Nakagawa K."/>
            <person name="Okumura K."/>
            <person name="Nagase T."/>
            <person name="Nomura N."/>
            <person name="Kikuchi H."/>
            <person name="Masuho Y."/>
            <person name="Yamashita R."/>
            <person name="Nakai K."/>
            <person name="Yada T."/>
            <person name="Nakamura Y."/>
            <person name="Ohara O."/>
            <person name="Isogai T."/>
            <person name="Sugano S."/>
        </authorList>
    </citation>
    <scope>NUCLEOTIDE SEQUENCE [LARGE SCALE MRNA] (ISOFORMS 3; 5; 6 AND 7)</scope>
    <scope>NUCLEOTIDE SEQUENCE [LARGE SCALE MRNA] OF 1136-1204 (ISOFORM 1)</scope>
    <source>
        <tissue>Astrocyte</tissue>
        <tissue>Brain</tissue>
        <tissue>Placenta</tissue>
        <tissue>Testis</tissue>
    </source>
</reference>
<reference key="2">
    <citation type="journal article" date="2007" name="BMC Genomics">
        <title>The full-ORF clone resource of the German cDNA consortium.</title>
        <authorList>
            <person name="Bechtel S."/>
            <person name="Rosenfelder H."/>
            <person name="Duda A."/>
            <person name="Schmidt C.P."/>
            <person name="Ernst U."/>
            <person name="Wellenreuther R."/>
            <person name="Mehrle A."/>
            <person name="Schuster C."/>
            <person name="Bahr A."/>
            <person name="Bloecker H."/>
            <person name="Heubner D."/>
            <person name="Hoerlein A."/>
            <person name="Michel G."/>
            <person name="Wedler H."/>
            <person name="Koehrer K."/>
            <person name="Ottenwaelder B."/>
            <person name="Poustka A."/>
            <person name="Wiemann S."/>
            <person name="Schupp I."/>
        </authorList>
    </citation>
    <scope>NUCLEOTIDE SEQUENCE [LARGE SCALE MRNA] (ISOFORM 2)</scope>
    <source>
        <tissue>Testis</tissue>
    </source>
</reference>
<reference key="3">
    <citation type="journal article" date="2005" name="Nature">
        <title>Generation and annotation of the DNA sequences of human chromosomes 2 and 4.</title>
        <authorList>
            <person name="Hillier L.W."/>
            <person name="Graves T.A."/>
            <person name="Fulton R.S."/>
            <person name="Fulton L.A."/>
            <person name="Pepin K.H."/>
            <person name="Minx P."/>
            <person name="Wagner-McPherson C."/>
            <person name="Layman D."/>
            <person name="Wylie K."/>
            <person name="Sekhon M."/>
            <person name="Becker M.C."/>
            <person name="Fewell G.A."/>
            <person name="Delehaunty K.D."/>
            <person name="Miner T.L."/>
            <person name="Nash W.E."/>
            <person name="Kremitzki C."/>
            <person name="Oddy L."/>
            <person name="Du H."/>
            <person name="Sun H."/>
            <person name="Bradshaw-Cordum H."/>
            <person name="Ali J."/>
            <person name="Carter J."/>
            <person name="Cordes M."/>
            <person name="Harris A."/>
            <person name="Isak A."/>
            <person name="van Brunt A."/>
            <person name="Nguyen C."/>
            <person name="Du F."/>
            <person name="Courtney L."/>
            <person name="Kalicki J."/>
            <person name="Ozersky P."/>
            <person name="Abbott S."/>
            <person name="Armstrong J."/>
            <person name="Belter E.A."/>
            <person name="Caruso L."/>
            <person name="Cedroni M."/>
            <person name="Cotton M."/>
            <person name="Davidson T."/>
            <person name="Desai A."/>
            <person name="Elliott G."/>
            <person name="Erb T."/>
            <person name="Fronick C."/>
            <person name="Gaige T."/>
            <person name="Haakenson W."/>
            <person name="Haglund K."/>
            <person name="Holmes A."/>
            <person name="Harkins R."/>
            <person name="Kim K."/>
            <person name="Kruchowski S.S."/>
            <person name="Strong C.M."/>
            <person name="Grewal N."/>
            <person name="Goyea E."/>
            <person name="Hou S."/>
            <person name="Levy A."/>
            <person name="Martinka S."/>
            <person name="Mead K."/>
            <person name="McLellan M.D."/>
            <person name="Meyer R."/>
            <person name="Randall-Maher J."/>
            <person name="Tomlinson C."/>
            <person name="Dauphin-Kohlberg S."/>
            <person name="Kozlowicz-Reilly A."/>
            <person name="Shah N."/>
            <person name="Swearengen-Shahid S."/>
            <person name="Snider J."/>
            <person name="Strong J.T."/>
            <person name="Thompson J."/>
            <person name="Yoakum M."/>
            <person name="Leonard S."/>
            <person name="Pearman C."/>
            <person name="Trani L."/>
            <person name="Radionenko M."/>
            <person name="Waligorski J.E."/>
            <person name="Wang C."/>
            <person name="Rock S.M."/>
            <person name="Tin-Wollam A.-M."/>
            <person name="Maupin R."/>
            <person name="Latreille P."/>
            <person name="Wendl M.C."/>
            <person name="Yang S.-P."/>
            <person name="Pohl C."/>
            <person name="Wallis J.W."/>
            <person name="Spieth J."/>
            <person name="Bieri T.A."/>
            <person name="Berkowicz N."/>
            <person name="Nelson J.O."/>
            <person name="Osborne J."/>
            <person name="Ding L."/>
            <person name="Meyer R."/>
            <person name="Sabo A."/>
            <person name="Shotland Y."/>
            <person name="Sinha P."/>
            <person name="Wohldmann P.E."/>
            <person name="Cook L.L."/>
            <person name="Hickenbotham M.T."/>
            <person name="Eldred J."/>
            <person name="Williams D."/>
            <person name="Jones T.A."/>
            <person name="She X."/>
            <person name="Ciccarelli F.D."/>
            <person name="Izaurralde E."/>
            <person name="Taylor J."/>
            <person name="Schmutz J."/>
            <person name="Myers R.M."/>
            <person name="Cox D.R."/>
            <person name="Huang X."/>
            <person name="McPherson J.D."/>
            <person name="Mardis E.R."/>
            <person name="Clifton S.W."/>
            <person name="Warren W.C."/>
            <person name="Chinwalla A.T."/>
            <person name="Eddy S.R."/>
            <person name="Marra M.A."/>
            <person name="Ovcharenko I."/>
            <person name="Furey T.S."/>
            <person name="Miller W."/>
            <person name="Eichler E.E."/>
            <person name="Bork P."/>
            <person name="Suyama M."/>
            <person name="Torrents D."/>
            <person name="Waterston R.H."/>
            <person name="Wilson R.K."/>
        </authorList>
    </citation>
    <scope>NUCLEOTIDE SEQUENCE [LARGE SCALE GENOMIC DNA]</scope>
</reference>
<reference key="4">
    <citation type="journal article" date="2004" name="Genome Res.">
        <title>The status, quality, and expansion of the NIH full-length cDNA project: the Mammalian Gene Collection (MGC).</title>
        <authorList>
            <consortium name="The MGC Project Team"/>
        </authorList>
    </citation>
    <scope>NUCLEOTIDE SEQUENCE [LARGE SCALE MRNA] (ISOFORM 4)</scope>
    <scope>VARIANT GLU-451</scope>
    <source>
        <tissue>Testis</tissue>
    </source>
</reference>
<reference key="5">
    <citation type="journal article" date="2013" name="J. Proteome Res.">
        <title>Toward a comprehensive characterization of a human cancer cell phosphoproteome.</title>
        <authorList>
            <person name="Zhou H."/>
            <person name="Di Palma S."/>
            <person name="Preisinger C."/>
            <person name="Peng M."/>
            <person name="Polat A.N."/>
            <person name="Heck A.J."/>
            <person name="Mohammed S."/>
        </authorList>
    </citation>
    <scope>PHOSPHORYLATION [LARGE SCALE ANALYSIS] AT SER-793 AND SER-864</scope>
    <scope>IDENTIFICATION BY MASS SPECTROMETRY [LARGE SCALE ANALYSIS]</scope>
    <source>
        <tissue>Cervix carcinoma</tissue>
        <tissue>Erythroleukemia</tissue>
    </source>
</reference>
<reference key="6">
    <citation type="journal article" date="2020" name="Cell Rep.">
        <title>The ZGRF1 Helicase Promotes Recombinational Repair of Replication-Blocking DNA Damage in Human Cells.</title>
        <authorList>
            <person name="Brannvoll A."/>
            <person name="Xue X."/>
            <person name="Kwon Y."/>
            <person name="Kompocholi S."/>
            <person name="Simonsen A.K.W."/>
            <person name="Viswalingam K.S."/>
            <person name="Gonzalez L."/>
            <person name="Hickson I.D."/>
            <person name="Oestergaard V.H."/>
            <person name="Mankouri H.W."/>
            <person name="Sung P."/>
            <person name="Lisby M."/>
        </authorList>
    </citation>
    <scope>FUNCTION</scope>
    <scope>CATALYTIC ACTIVITY</scope>
    <scope>INTERACTION WITH RAD51</scope>
    <scope>SUBCELLULAR LOCATION</scope>
    <scope>MUTAGENESIS OF LYS-1660</scope>
</reference>
<reference key="7">
    <citation type="journal article" date="2021" name="Cell. Death. Discov.">
        <title>ZGRF1 promotes end resection of DNA homologous recombination via forming complex with BRCA1/EXO1.</title>
        <authorList>
            <person name="Yan S."/>
            <person name="Song M."/>
            <person name="Ping J."/>
            <person name="Lai S.T."/>
            <person name="Cao X.Y."/>
            <person name="Bai C.J."/>
            <person name="Xie D.F."/>
            <person name="Guan H."/>
            <person name="Gao S.S."/>
            <person name="Zhou P.K."/>
        </authorList>
    </citation>
    <scope>FUNCTION</scope>
    <scope>INTERACTION WITH BRCA1 AND EXO1</scope>
</reference>
<reference key="8">
    <citation type="journal article" date="2022" name="Cell. Death. Discov.">
        <authorList>
            <person name="Yan S."/>
            <person name="Song M."/>
            <person name="Ping J."/>
            <person name="Lai S.T."/>
            <person name="Cao X.Y."/>
            <person name="Bai C.J."/>
            <person name="Xie D.F."/>
            <person name="Guan H."/>
            <person name="Gao S.S."/>
            <person name="Zhou P.K."/>
        </authorList>
    </citation>
    <scope>ERRATUM OF PUBMED:34552057</scope>
</reference>
<feature type="chain" id="PRO_0000286626" description="5'-3' DNA helicase ZGRF1">
    <location>
        <begin position="1"/>
        <end position="2104"/>
    </location>
</feature>
<feature type="zinc finger region" description="GRF-type" evidence="2">
    <location>
        <begin position="1349"/>
        <end position="1391"/>
    </location>
</feature>
<feature type="region of interest" description="Disordered" evidence="3">
    <location>
        <begin position="335"/>
        <end position="359"/>
    </location>
</feature>
<feature type="region of interest" description="Disordered" evidence="3">
    <location>
        <begin position="2085"/>
        <end position="2104"/>
    </location>
</feature>
<feature type="compositionally biased region" description="Polar residues" evidence="3">
    <location>
        <begin position="335"/>
        <end position="345"/>
    </location>
</feature>
<feature type="compositionally biased region" description="Basic and acidic residues" evidence="3">
    <location>
        <begin position="347"/>
        <end position="356"/>
    </location>
</feature>
<feature type="binding site" evidence="2">
    <location>
        <position position="1349"/>
    </location>
    <ligand>
        <name>Zn(2+)</name>
        <dbReference type="ChEBI" id="CHEBI:29105"/>
    </ligand>
</feature>
<feature type="binding site" evidence="2">
    <location>
        <position position="1351"/>
    </location>
    <ligand>
        <name>Zn(2+)</name>
        <dbReference type="ChEBI" id="CHEBI:29105"/>
    </ligand>
</feature>
<feature type="binding site" evidence="2">
    <location>
        <position position="1374"/>
    </location>
    <ligand>
        <name>Zn(2+)</name>
        <dbReference type="ChEBI" id="CHEBI:29105"/>
    </ligand>
</feature>
<feature type="binding site" evidence="2">
    <location>
        <position position="1382"/>
    </location>
    <ligand>
        <name>Zn(2+)</name>
        <dbReference type="ChEBI" id="CHEBI:29105"/>
    </ligand>
</feature>
<feature type="modified residue" description="Phosphoserine" evidence="1">
    <location>
        <position position="336"/>
    </location>
</feature>
<feature type="modified residue" description="Phosphoserine" evidence="12">
    <location>
        <position position="793"/>
    </location>
</feature>
<feature type="modified residue" description="Phosphoserine" evidence="12">
    <location>
        <position position="864"/>
    </location>
</feature>
<feature type="splice variant" id="VSP_053232" description="In isoform 2." evidence="9">
    <location>
        <begin position="1"/>
        <end position="1865"/>
    </location>
</feature>
<feature type="splice variant" id="VSP_053233" description="In isoform 7." evidence="7">
    <location>
        <begin position="1"/>
        <end position="1542"/>
    </location>
</feature>
<feature type="splice variant" id="VSP_053234" description="In isoform 6." evidence="7">
    <original>MESQEFIVLYTHQKMKKSKVWQDGILKITHLGNK</original>
    <variation>MFQ</variation>
    <location>
        <begin position="1"/>
        <end position="34"/>
    </location>
</feature>
<feature type="splice variant" id="VSP_053235" description="In isoform 3." evidence="7">
    <location>
        <begin position="596"/>
        <end position="717"/>
    </location>
</feature>
<feature type="splice variant" id="VSP_053236" description="In isoform 6." evidence="7">
    <original>ILKEDEVELSEPLQSVQFSSSGSKEETAFQAVIPKQIERKTCDPKPVEFQGHQVKGSA</original>
    <variation>KTVKKKIKPTLPLRIFINVSRFFCVQLKKMVRLMYINSFISFPLNIVVLSYIINNSS</variation>
    <location>
        <begin position="890"/>
        <end position="947"/>
    </location>
</feature>
<feature type="splice variant" id="VSP_053237" description="In isoform 5." evidence="7">
    <original>FSSSGSKEETAFQAVIPKQIE</original>
    <variation>TGSYSVTQTRVQWHSHSSLQP</variation>
    <location>
        <begin position="907"/>
        <end position="927"/>
    </location>
</feature>
<feature type="splice variant" id="VSP_053238" description="In isoform 5." evidence="7">
    <location>
        <begin position="928"/>
        <end position="2104"/>
    </location>
</feature>
<feature type="splice variant" id="VSP_053239" description="In isoform 3." evidence="7">
    <original>PVEFQGHQVKGSATSGVMVR</original>
    <variation>VKFVKNIDLFNQLHFLFCLK</variation>
    <location>
        <begin position="935"/>
        <end position="954"/>
    </location>
</feature>
<feature type="splice variant" id="VSP_053240" description="In isoform 6." evidence="7">
    <location>
        <begin position="948"/>
        <end position="2104"/>
    </location>
</feature>
<feature type="splice variant" id="VSP_053241" description="In isoform 3." evidence="7">
    <location>
        <begin position="955"/>
        <end position="2104"/>
    </location>
</feature>
<feature type="splice variant" id="VSP_053242" description="In isoform 4." evidence="8">
    <original>MKKSRSLENENLQRLSLLS</original>
    <variation>SRYHIALISVYSFKMKFFI</variation>
    <location>
        <begin position="1044"/>
        <end position="1062"/>
    </location>
</feature>
<feature type="splice variant" id="VSP_053243" description="In isoform 4." evidence="8">
    <location>
        <begin position="1063"/>
        <end position="2104"/>
    </location>
</feature>
<feature type="splice variant" id="VSP_053244" description="In isoform 7." evidence="7">
    <original>TTLKNIQDYFNPATLPLTQYLLTT</original>
    <variation>MNYSTHLFQMPLFLKLFICFIFIR</variation>
    <location>
        <begin position="1543"/>
        <end position="1566"/>
    </location>
</feature>
<feature type="sequence variant" id="VAR_032147" description="In dbSNP:rs7696816.">
    <original>N</original>
    <variation>S</variation>
    <location>
        <position position="410"/>
    </location>
</feature>
<feature type="sequence variant" id="VAR_032148" description="In dbSNP:rs17854334." evidence="4">
    <original>G</original>
    <variation>E</variation>
    <location>
        <position position="451"/>
    </location>
</feature>
<feature type="sequence variant" id="VAR_032149" description="In dbSNP:rs17669218.">
    <original>T</original>
    <variation>I</variation>
    <location>
        <position position="978"/>
    </location>
</feature>
<feature type="sequence variant" id="VAR_037862" description="In dbSNP:rs3828539.">
    <original>I</original>
    <variation>T</variation>
    <location>
        <position position="1410"/>
    </location>
</feature>
<feature type="sequence variant" id="VAR_037863" description="In dbSNP:rs17605622.">
    <original>S</original>
    <variation>L</variation>
    <location>
        <position position="1568"/>
    </location>
</feature>
<feature type="sequence variant" id="VAR_037864" description="In dbSNP:rs3762891.">
    <original>S</original>
    <variation>C</variation>
    <location>
        <position position="1696"/>
    </location>
</feature>
<feature type="mutagenesis site" description="Loss of helicase activity." evidence="5">
    <original>K</original>
    <variation>A</variation>
    <location>
        <position position="1660"/>
    </location>
</feature>
<feature type="sequence conflict" description="In Ref. 1; BAG61698." evidence="11" ref="1">
    <original>F</original>
    <variation>L</variation>
    <location>
        <position position="374"/>
    </location>
</feature>
<feature type="sequence conflict" description="In Ref. 1; BAG63860." evidence="11" ref="1">
    <original>I</original>
    <variation>V</variation>
    <location>
        <position position="873"/>
    </location>
</feature>
<feature type="sequence conflict" description="In Ref. 4; AAH44799." evidence="11" ref="4">
    <original>S</original>
    <variation>G</variation>
    <location>
        <position position="963"/>
    </location>
</feature>
<feature type="sequence conflict" description="In Ref. 1; BAG52184." evidence="11" ref="1">
    <original>Y</original>
    <variation>M</variation>
    <location>
        <position position="1251"/>
    </location>
</feature>
<protein>
    <recommendedName>
        <fullName evidence="10">5'-3' DNA helicase ZGRF1</fullName>
        <ecNumber evidence="5">5.6.2.3</ecNumber>
    </recommendedName>
    <alternativeName>
        <fullName>GRF-type zinc finger domain-containing protein 1</fullName>
    </alternativeName>
</protein>
<evidence type="ECO:0000250" key="1">
    <source>
        <dbReference type="UniProtKB" id="Q0VGT4"/>
    </source>
</evidence>
<evidence type="ECO:0000255" key="2">
    <source>
        <dbReference type="PROSITE-ProRule" id="PRU01343"/>
    </source>
</evidence>
<evidence type="ECO:0000256" key="3">
    <source>
        <dbReference type="SAM" id="MobiDB-lite"/>
    </source>
</evidence>
<evidence type="ECO:0000269" key="4">
    <source>
    </source>
</evidence>
<evidence type="ECO:0000269" key="5">
    <source>
    </source>
</evidence>
<evidence type="ECO:0000269" key="6">
    <source>
    </source>
</evidence>
<evidence type="ECO:0000303" key="7">
    <source>
    </source>
</evidence>
<evidence type="ECO:0000303" key="8">
    <source>
    </source>
</evidence>
<evidence type="ECO:0000303" key="9">
    <source>
    </source>
</evidence>
<evidence type="ECO:0000303" key="10">
    <source>
    </source>
</evidence>
<evidence type="ECO:0000305" key="11"/>
<evidence type="ECO:0007744" key="12">
    <source>
    </source>
</evidence>
<comment type="function">
    <text evidence="5 6">5'-3' DNA helicase which is recruited to sites of DNA damage and promotes repair of replication-blocking DNA lesions through stimulation of homologous recombination (HR) (PubMed:32640219, PubMed:34552057). Promotes HR by directly stimulating RAD51-mediated strand exchange activity (PubMed:32640219). Not required to load RAD51 at sites of DNA damage but promotes recombinational repair after RAD51 recruitment (PubMed:32640219). Also promotes HR by positively regulating EXO1-mediated DNA end resection of double-strand breaks (PubMed:34552057). Required for recruitment of replication protein RPA2 to DNA damage sites (PubMed:34552057). Promotes the initiation of the G2/M checkpoint but not its maintenance (PubMed:34552057). Catalyzes Holliday junction branch migration and dissociation of D-loops and DNA flaps (PubMed:32640219).</text>
</comment>
<comment type="catalytic activity">
    <reaction evidence="5">
        <text>ATP + H2O = ADP + phosphate + H(+)</text>
        <dbReference type="Rhea" id="RHEA:13065"/>
        <dbReference type="ChEBI" id="CHEBI:15377"/>
        <dbReference type="ChEBI" id="CHEBI:15378"/>
        <dbReference type="ChEBI" id="CHEBI:30616"/>
        <dbReference type="ChEBI" id="CHEBI:43474"/>
        <dbReference type="ChEBI" id="CHEBI:456216"/>
        <dbReference type="EC" id="5.6.2.3"/>
    </reaction>
</comment>
<comment type="catalytic activity">
    <reaction evidence="5">
        <text>Couples ATP hydrolysis with the unwinding of duplex DNA at the replication fork by translocating in the 5'-3' direction. This creates two antiparallel DNA single strands (ssDNA). The leading ssDNA polymer is the template for DNA polymerase III holoenzyme which synthesizes a continuous strand.</text>
        <dbReference type="EC" id="5.6.2.3"/>
    </reaction>
</comment>
<comment type="subunit">
    <text evidence="5 6">Interacts with DNA repair protein RAD51; the interaction promotes RAD51 strand exchange activity (PubMed:32640219). Also interacts with DNA repair proteins EXO1 and BRCA1; the interactions are increased following DNA damage induction (PubMed:34552057).</text>
</comment>
<comment type="interaction">
    <interactant intactId="EBI-10962579">
        <id>Q86YA3</id>
    </interactant>
    <interactant intactId="EBI-349905">
        <id>P38398</id>
        <label>BRCA1</label>
    </interactant>
    <organismsDiffer>false</organismsDiffer>
    <experiments>4</experiments>
</comment>
<comment type="interaction">
    <interactant intactId="EBI-10962579">
        <id>Q86YA3</id>
    </interactant>
    <interactant intactId="EBI-944667">
        <id>Q9UQ84</id>
        <label>EXO1</label>
    </interactant>
    <organismsDiffer>false</organismsDiffer>
    <experiments>3</experiments>
</comment>
<comment type="subcellular location">
    <subcellularLocation>
        <location evidence="5">Nucleus</location>
    </subcellularLocation>
</comment>
<comment type="alternative products">
    <event type="alternative splicing"/>
    <isoform>
        <id>Q86YA3-1</id>
        <name>1</name>
        <sequence type="displayed"/>
    </isoform>
    <isoform>
        <id>Q86YA3-2</id>
        <name>2</name>
        <sequence type="described" ref="VSP_053232"/>
    </isoform>
    <isoform>
        <id>Q86YA3-3</id>
        <name>3</name>
        <sequence type="described" ref="VSP_053235 VSP_053239 VSP_053241"/>
    </isoform>
    <isoform>
        <id>Q86YA3-4</id>
        <name>4</name>
        <sequence type="described" ref="VSP_053242 VSP_053243"/>
    </isoform>
    <isoform>
        <id>Q86YA3-5</id>
        <name>5</name>
        <sequence type="described" ref="VSP_053237 VSP_053238"/>
    </isoform>
    <isoform>
        <id>Q86YA3-6</id>
        <name>6</name>
        <sequence type="described" ref="VSP_053234 VSP_053236 VSP_053240"/>
    </isoform>
    <isoform>
        <id>Q86YA3-7</id>
        <name>7</name>
        <sequence type="described" ref="VSP_053233 VSP_053244"/>
    </isoform>
</comment>
<comment type="sequence caution" evidence="11">
    <conflict type="erroneous initiation">
        <sequence resource="EMBL-CDS" id="BAC86416"/>
    </conflict>
    <text>Truncated N-terminus.</text>
</comment>
<gene>
    <name type="primary">ZGRF1</name>
    <name type="synonym">C4orf21</name>
</gene>